<name>RS19_BACCR</name>
<reference key="1">
    <citation type="journal article" date="2003" name="Nature">
        <title>Genome sequence of Bacillus cereus and comparative analysis with Bacillus anthracis.</title>
        <authorList>
            <person name="Ivanova N."/>
            <person name="Sorokin A."/>
            <person name="Anderson I."/>
            <person name="Galleron N."/>
            <person name="Candelon B."/>
            <person name="Kapatral V."/>
            <person name="Bhattacharyya A."/>
            <person name="Reznik G."/>
            <person name="Mikhailova N."/>
            <person name="Lapidus A."/>
            <person name="Chu L."/>
            <person name="Mazur M."/>
            <person name="Goltsman E."/>
            <person name="Larsen N."/>
            <person name="D'Souza M."/>
            <person name="Walunas T."/>
            <person name="Grechkin Y."/>
            <person name="Pusch G."/>
            <person name="Haselkorn R."/>
            <person name="Fonstein M."/>
            <person name="Ehrlich S.D."/>
            <person name="Overbeek R."/>
            <person name="Kyrpides N.C."/>
        </authorList>
    </citation>
    <scope>NUCLEOTIDE SEQUENCE [LARGE SCALE GENOMIC DNA]</scope>
    <source>
        <strain>ATCC 14579 / DSM 31 / CCUG 7414 / JCM 2152 / NBRC 15305 / NCIMB 9373 / NCTC 2599 / NRRL B-3711</strain>
    </source>
</reference>
<comment type="function">
    <text evidence="1">Protein S19 forms a complex with S13 that binds strongly to the 16S ribosomal RNA.</text>
</comment>
<comment type="similarity">
    <text evidence="1">Belongs to the universal ribosomal protein uS19 family.</text>
</comment>
<accession>Q81J38</accession>
<evidence type="ECO:0000255" key="1">
    <source>
        <dbReference type="HAMAP-Rule" id="MF_00531"/>
    </source>
</evidence>
<evidence type="ECO:0000305" key="2"/>
<sequence length="92" mass="10628">MARSLKKGPFVDDHLMSKMEKLVASEQKQVVKTWSRRSTIFPQFIGHTIAVYDGRKHVPVYITEDMVGHKLGEFAPTRTYKGHLADDKKTRR</sequence>
<dbReference type="EMBL" id="AE016877">
    <property type="protein sequence ID" value="AAP07216.1"/>
    <property type="molecule type" value="Genomic_DNA"/>
</dbReference>
<dbReference type="RefSeq" id="NP_830015.1">
    <property type="nucleotide sequence ID" value="NC_004722.1"/>
</dbReference>
<dbReference type="RefSeq" id="WP_000124454.1">
    <property type="nucleotide sequence ID" value="NZ_CP138336.1"/>
</dbReference>
<dbReference type="SMR" id="Q81J38"/>
<dbReference type="STRING" id="226900.BC_0135"/>
<dbReference type="MetOSite" id="Q81J38"/>
<dbReference type="GeneID" id="92887807"/>
<dbReference type="KEGG" id="bce:BC0135"/>
<dbReference type="PATRIC" id="fig|226900.8.peg.136"/>
<dbReference type="HOGENOM" id="CLU_144911_0_1_9"/>
<dbReference type="OrthoDB" id="9797833at2"/>
<dbReference type="PRO" id="PR:Q81J38"/>
<dbReference type="Proteomes" id="UP000001417">
    <property type="component" value="Chromosome"/>
</dbReference>
<dbReference type="GO" id="GO:0005737">
    <property type="term" value="C:cytoplasm"/>
    <property type="evidence" value="ECO:0007669"/>
    <property type="project" value="UniProtKB-ARBA"/>
</dbReference>
<dbReference type="GO" id="GO:0015935">
    <property type="term" value="C:small ribosomal subunit"/>
    <property type="evidence" value="ECO:0007669"/>
    <property type="project" value="InterPro"/>
</dbReference>
<dbReference type="GO" id="GO:0019843">
    <property type="term" value="F:rRNA binding"/>
    <property type="evidence" value="ECO:0007669"/>
    <property type="project" value="UniProtKB-UniRule"/>
</dbReference>
<dbReference type="GO" id="GO:0003735">
    <property type="term" value="F:structural constituent of ribosome"/>
    <property type="evidence" value="ECO:0000318"/>
    <property type="project" value="GO_Central"/>
</dbReference>
<dbReference type="GO" id="GO:0000028">
    <property type="term" value="P:ribosomal small subunit assembly"/>
    <property type="evidence" value="ECO:0000318"/>
    <property type="project" value="GO_Central"/>
</dbReference>
<dbReference type="GO" id="GO:0006412">
    <property type="term" value="P:translation"/>
    <property type="evidence" value="ECO:0007669"/>
    <property type="project" value="UniProtKB-UniRule"/>
</dbReference>
<dbReference type="FunFam" id="3.30.860.10:FF:000001">
    <property type="entry name" value="30S ribosomal protein S19"/>
    <property type="match status" value="1"/>
</dbReference>
<dbReference type="Gene3D" id="3.30.860.10">
    <property type="entry name" value="30s Ribosomal Protein S19, Chain A"/>
    <property type="match status" value="1"/>
</dbReference>
<dbReference type="HAMAP" id="MF_00531">
    <property type="entry name" value="Ribosomal_uS19"/>
    <property type="match status" value="1"/>
</dbReference>
<dbReference type="InterPro" id="IPR002222">
    <property type="entry name" value="Ribosomal_uS19"/>
</dbReference>
<dbReference type="InterPro" id="IPR005732">
    <property type="entry name" value="Ribosomal_uS19_bac-type"/>
</dbReference>
<dbReference type="InterPro" id="IPR020934">
    <property type="entry name" value="Ribosomal_uS19_CS"/>
</dbReference>
<dbReference type="InterPro" id="IPR023575">
    <property type="entry name" value="Ribosomal_uS19_SF"/>
</dbReference>
<dbReference type="NCBIfam" id="TIGR01050">
    <property type="entry name" value="rpsS_bact"/>
    <property type="match status" value="1"/>
</dbReference>
<dbReference type="PANTHER" id="PTHR11880">
    <property type="entry name" value="RIBOSOMAL PROTEIN S19P FAMILY MEMBER"/>
    <property type="match status" value="1"/>
</dbReference>
<dbReference type="PANTHER" id="PTHR11880:SF8">
    <property type="entry name" value="SMALL RIBOSOMAL SUBUNIT PROTEIN US19M"/>
    <property type="match status" value="1"/>
</dbReference>
<dbReference type="Pfam" id="PF00203">
    <property type="entry name" value="Ribosomal_S19"/>
    <property type="match status" value="1"/>
</dbReference>
<dbReference type="PIRSF" id="PIRSF002144">
    <property type="entry name" value="Ribosomal_S19"/>
    <property type="match status" value="1"/>
</dbReference>
<dbReference type="PRINTS" id="PR00975">
    <property type="entry name" value="RIBOSOMALS19"/>
</dbReference>
<dbReference type="SUPFAM" id="SSF54570">
    <property type="entry name" value="Ribosomal protein S19"/>
    <property type="match status" value="1"/>
</dbReference>
<dbReference type="PROSITE" id="PS00323">
    <property type="entry name" value="RIBOSOMAL_S19"/>
    <property type="match status" value="1"/>
</dbReference>
<gene>
    <name evidence="1" type="primary">rpsS</name>
    <name type="ordered locus">BC_0135</name>
</gene>
<protein>
    <recommendedName>
        <fullName evidence="1">Small ribosomal subunit protein uS19</fullName>
    </recommendedName>
    <alternativeName>
        <fullName evidence="2">30S ribosomal protein S19</fullName>
    </alternativeName>
</protein>
<keyword id="KW-1185">Reference proteome</keyword>
<keyword id="KW-0687">Ribonucleoprotein</keyword>
<keyword id="KW-0689">Ribosomal protein</keyword>
<keyword id="KW-0694">RNA-binding</keyword>
<keyword id="KW-0699">rRNA-binding</keyword>
<organism>
    <name type="scientific">Bacillus cereus (strain ATCC 14579 / DSM 31 / CCUG 7414 / JCM 2152 / NBRC 15305 / NCIMB 9373 / NCTC 2599 / NRRL B-3711)</name>
    <dbReference type="NCBI Taxonomy" id="226900"/>
    <lineage>
        <taxon>Bacteria</taxon>
        <taxon>Bacillati</taxon>
        <taxon>Bacillota</taxon>
        <taxon>Bacilli</taxon>
        <taxon>Bacillales</taxon>
        <taxon>Bacillaceae</taxon>
        <taxon>Bacillus</taxon>
        <taxon>Bacillus cereus group</taxon>
    </lineage>
</organism>
<feature type="chain" id="PRO_0000129773" description="Small ribosomal subunit protein uS19">
    <location>
        <begin position="1"/>
        <end position="92"/>
    </location>
</feature>
<proteinExistence type="inferred from homology"/>